<dbReference type="EC" id="2.7.7.101" evidence="1"/>
<dbReference type="EMBL" id="AE017197">
    <property type="protein sequence ID" value="AAU04302.1"/>
    <property type="molecule type" value="Genomic_DNA"/>
</dbReference>
<dbReference type="RefSeq" id="WP_011191276.1">
    <property type="nucleotide sequence ID" value="NC_006142.1"/>
</dbReference>
<dbReference type="SMR" id="Q68VQ4"/>
<dbReference type="KEGG" id="rty:RT0848"/>
<dbReference type="eggNOG" id="COG0358">
    <property type="taxonomic scope" value="Bacteria"/>
</dbReference>
<dbReference type="HOGENOM" id="CLU_013501_5_3_5"/>
<dbReference type="OrthoDB" id="9803773at2"/>
<dbReference type="Proteomes" id="UP000000604">
    <property type="component" value="Chromosome"/>
</dbReference>
<dbReference type="GO" id="GO:0005737">
    <property type="term" value="C:cytoplasm"/>
    <property type="evidence" value="ECO:0007669"/>
    <property type="project" value="TreeGrafter"/>
</dbReference>
<dbReference type="GO" id="GO:0000428">
    <property type="term" value="C:DNA-directed RNA polymerase complex"/>
    <property type="evidence" value="ECO:0007669"/>
    <property type="project" value="UniProtKB-KW"/>
</dbReference>
<dbReference type="GO" id="GO:1990077">
    <property type="term" value="C:primosome complex"/>
    <property type="evidence" value="ECO:0007669"/>
    <property type="project" value="UniProtKB-KW"/>
</dbReference>
<dbReference type="GO" id="GO:0003677">
    <property type="term" value="F:DNA binding"/>
    <property type="evidence" value="ECO:0007669"/>
    <property type="project" value="UniProtKB-KW"/>
</dbReference>
<dbReference type="GO" id="GO:0003899">
    <property type="term" value="F:DNA-directed RNA polymerase activity"/>
    <property type="evidence" value="ECO:0007669"/>
    <property type="project" value="InterPro"/>
</dbReference>
<dbReference type="GO" id="GO:0008270">
    <property type="term" value="F:zinc ion binding"/>
    <property type="evidence" value="ECO:0007669"/>
    <property type="project" value="UniProtKB-UniRule"/>
</dbReference>
<dbReference type="GO" id="GO:0006269">
    <property type="term" value="P:DNA replication, synthesis of primer"/>
    <property type="evidence" value="ECO:0007669"/>
    <property type="project" value="UniProtKB-UniRule"/>
</dbReference>
<dbReference type="CDD" id="cd03364">
    <property type="entry name" value="TOPRIM_DnaG_primases"/>
    <property type="match status" value="1"/>
</dbReference>
<dbReference type="FunFam" id="3.40.1360.10:FF:000002">
    <property type="entry name" value="DNA primase"/>
    <property type="match status" value="1"/>
</dbReference>
<dbReference type="FunFam" id="3.90.580.10:FF:000001">
    <property type="entry name" value="DNA primase"/>
    <property type="match status" value="1"/>
</dbReference>
<dbReference type="Gene3D" id="3.40.1360.10">
    <property type="match status" value="1"/>
</dbReference>
<dbReference type="Gene3D" id="3.90.980.10">
    <property type="entry name" value="DNA primase, catalytic core, N-terminal domain"/>
    <property type="match status" value="1"/>
</dbReference>
<dbReference type="Gene3D" id="3.90.580.10">
    <property type="entry name" value="Zinc finger, CHC2-type domain"/>
    <property type="match status" value="1"/>
</dbReference>
<dbReference type="HAMAP" id="MF_00974">
    <property type="entry name" value="DNA_primase_DnaG"/>
    <property type="match status" value="1"/>
</dbReference>
<dbReference type="InterPro" id="IPR037068">
    <property type="entry name" value="DNA_primase_core_N_sf"/>
</dbReference>
<dbReference type="InterPro" id="IPR006295">
    <property type="entry name" value="DNA_primase_DnaG"/>
</dbReference>
<dbReference type="InterPro" id="IPR036977">
    <property type="entry name" value="DNA_primase_Znf_CHC2"/>
</dbReference>
<dbReference type="InterPro" id="IPR030846">
    <property type="entry name" value="DnaG_bac"/>
</dbReference>
<dbReference type="InterPro" id="IPR013264">
    <property type="entry name" value="DNAG_N"/>
</dbReference>
<dbReference type="InterPro" id="IPR050219">
    <property type="entry name" value="DnaG_primase"/>
</dbReference>
<dbReference type="InterPro" id="IPR034151">
    <property type="entry name" value="TOPRIM_DnaG_bac"/>
</dbReference>
<dbReference type="InterPro" id="IPR006171">
    <property type="entry name" value="TOPRIM_dom"/>
</dbReference>
<dbReference type="InterPro" id="IPR002694">
    <property type="entry name" value="Znf_CHC2"/>
</dbReference>
<dbReference type="NCBIfam" id="TIGR01391">
    <property type="entry name" value="dnaG"/>
    <property type="match status" value="1"/>
</dbReference>
<dbReference type="PANTHER" id="PTHR30313">
    <property type="entry name" value="DNA PRIMASE"/>
    <property type="match status" value="1"/>
</dbReference>
<dbReference type="PANTHER" id="PTHR30313:SF2">
    <property type="entry name" value="DNA PRIMASE"/>
    <property type="match status" value="1"/>
</dbReference>
<dbReference type="Pfam" id="PF08275">
    <property type="entry name" value="DNAG_N"/>
    <property type="match status" value="1"/>
</dbReference>
<dbReference type="Pfam" id="PF13155">
    <property type="entry name" value="Toprim_2"/>
    <property type="match status" value="1"/>
</dbReference>
<dbReference type="Pfam" id="PF01807">
    <property type="entry name" value="Zn_ribbon_DnaG"/>
    <property type="match status" value="1"/>
</dbReference>
<dbReference type="PIRSF" id="PIRSF002811">
    <property type="entry name" value="DnaG"/>
    <property type="match status" value="1"/>
</dbReference>
<dbReference type="SMART" id="SM00493">
    <property type="entry name" value="TOPRIM"/>
    <property type="match status" value="1"/>
</dbReference>
<dbReference type="SMART" id="SM00400">
    <property type="entry name" value="ZnF_CHCC"/>
    <property type="match status" value="1"/>
</dbReference>
<dbReference type="SUPFAM" id="SSF56731">
    <property type="entry name" value="DNA primase core"/>
    <property type="match status" value="1"/>
</dbReference>
<dbReference type="SUPFAM" id="SSF57783">
    <property type="entry name" value="Zinc beta-ribbon"/>
    <property type="match status" value="1"/>
</dbReference>
<dbReference type="PROSITE" id="PS50880">
    <property type="entry name" value="TOPRIM"/>
    <property type="match status" value="1"/>
</dbReference>
<accession>Q68VQ4</accession>
<organism>
    <name type="scientific">Rickettsia typhi (strain ATCC VR-144 / Wilmington)</name>
    <dbReference type="NCBI Taxonomy" id="257363"/>
    <lineage>
        <taxon>Bacteria</taxon>
        <taxon>Pseudomonadati</taxon>
        <taxon>Pseudomonadota</taxon>
        <taxon>Alphaproteobacteria</taxon>
        <taxon>Rickettsiales</taxon>
        <taxon>Rickettsiaceae</taxon>
        <taxon>Rickettsieae</taxon>
        <taxon>Rickettsia</taxon>
        <taxon>typhus group</taxon>
    </lineage>
</organism>
<comment type="function">
    <text evidence="1">RNA polymerase that catalyzes the synthesis of short RNA molecules used as primers for DNA polymerase during DNA replication.</text>
</comment>
<comment type="catalytic activity">
    <reaction evidence="1">
        <text>ssDNA + n NTP = ssDNA/pppN(pN)n-1 hybrid + (n-1) diphosphate.</text>
        <dbReference type="EC" id="2.7.7.101"/>
    </reaction>
</comment>
<comment type="cofactor">
    <cofactor evidence="1">
        <name>Zn(2+)</name>
        <dbReference type="ChEBI" id="CHEBI:29105"/>
    </cofactor>
    <text evidence="1">Binds 1 zinc ion per monomer.</text>
</comment>
<comment type="cofactor">
    <cofactor evidence="1">
        <name>Mg(2+)</name>
        <dbReference type="ChEBI" id="CHEBI:18420"/>
    </cofactor>
    <text evidence="1">Binds two Mg(2+) per subunit.</text>
</comment>
<comment type="subunit">
    <text evidence="1">Monomer. Interacts with DnaB.</text>
</comment>
<comment type="domain">
    <text evidence="1">Contains an N-terminal zinc-binding domain, a central core domain that contains the primase activity, and a C-terminal DnaB-binding domain.</text>
</comment>
<comment type="similarity">
    <text evidence="1">Belongs to the DnaG primase family.</text>
</comment>
<keyword id="KW-0235">DNA replication</keyword>
<keyword id="KW-0238">DNA-binding</keyword>
<keyword id="KW-0240">DNA-directed RNA polymerase</keyword>
<keyword id="KW-0460">Magnesium</keyword>
<keyword id="KW-0479">Metal-binding</keyword>
<keyword id="KW-0548">Nucleotidyltransferase</keyword>
<keyword id="KW-0639">Primosome</keyword>
<keyword id="KW-0804">Transcription</keyword>
<keyword id="KW-0808">Transferase</keyword>
<keyword id="KW-0862">Zinc</keyword>
<keyword id="KW-0863">Zinc-finger</keyword>
<gene>
    <name evidence="1" type="primary">dnaG</name>
    <name type="ordered locus">RT0848</name>
</gene>
<protein>
    <recommendedName>
        <fullName evidence="1">DNA primase</fullName>
        <ecNumber evidence="1">2.7.7.101</ecNumber>
    </recommendedName>
</protein>
<feature type="chain" id="PRO_0000280944" description="DNA primase">
    <location>
        <begin position="1"/>
        <end position="593"/>
    </location>
</feature>
<feature type="domain" description="Toprim" evidence="1">
    <location>
        <begin position="250"/>
        <end position="332"/>
    </location>
</feature>
<feature type="zinc finger region" description="CHC2-type" evidence="1">
    <location>
        <begin position="38"/>
        <end position="62"/>
    </location>
</feature>
<feature type="binding site" evidence="1">
    <location>
        <position position="256"/>
    </location>
    <ligand>
        <name>Mg(2+)</name>
        <dbReference type="ChEBI" id="CHEBI:18420"/>
        <label>1</label>
        <note>catalytic</note>
    </ligand>
</feature>
<feature type="binding site" evidence="1">
    <location>
        <position position="300"/>
    </location>
    <ligand>
        <name>Mg(2+)</name>
        <dbReference type="ChEBI" id="CHEBI:18420"/>
        <label>1</label>
        <note>catalytic</note>
    </ligand>
</feature>
<feature type="binding site" evidence="1">
    <location>
        <position position="300"/>
    </location>
    <ligand>
        <name>Mg(2+)</name>
        <dbReference type="ChEBI" id="CHEBI:18420"/>
        <label>2</label>
    </ligand>
</feature>
<feature type="binding site" evidence="1">
    <location>
        <position position="302"/>
    </location>
    <ligand>
        <name>Mg(2+)</name>
        <dbReference type="ChEBI" id="CHEBI:18420"/>
        <label>2</label>
    </ligand>
</feature>
<name>DNAG_RICTY</name>
<sequence length="593" mass="68659">MRVTQEFYELLRNRINISDVVRQKLALTRKSSNYVGLCPFHQEKTPSFTVSDSKRFFYCFGCKASGDVIKFTSNISGLSYNESAIKLANDYGIEIPKLTVKQKEFYEESDNILNILELANKFFRTQLTPEILNYLNQRNITETTIKEFSIGFSPRNNKFAKFFLDKKIDITTLGQAGLIGKRKNGEIYNLFSNRITIPIRNIYNKIVGFGARVLGNGLPKYLNSYETIVFQKNDTLYGEHKAISSSYKKNRSILVEGYFDVIALHQAGFSEVVASLGTSVTENHLHKLWRACDEIILCLDGDNAGIKASIRTINLALPLVNSEKKISFIRLPSGLDPDDVVNKNGADFFAKLIDKRISLSEMIWYIEYSGKNFKTAEEKANLEKNLKDYCNKISDSNLKASYYRFFKDQIWQNLVIKQKKIITQNFNSSLIASSHCYSELEMLEHAFCALLIKFPIMLAEKDIRDFILNLNFNNKSLEEFRNWYLNEIIDNKVEESEITAIVEKTSFFDIFLLLSKADNLFLDISFNKNNIRLDLLWQWLYKKYYLINLQQEYAISINGNHDFEKVLLYKKEILKIVNELQVLNESFINQTIT</sequence>
<evidence type="ECO:0000255" key="1">
    <source>
        <dbReference type="HAMAP-Rule" id="MF_00974"/>
    </source>
</evidence>
<reference key="1">
    <citation type="journal article" date="2004" name="J. Bacteriol.">
        <title>Complete genome sequence of Rickettsia typhi and comparison with sequences of other Rickettsiae.</title>
        <authorList>
            <person name="McLeod M.P."/>
            <person name="Qin X."/>
            <person name="Karpathy S.E."/>
            <person name="Gioia J."/>
            <person name="Highlander S.K."/>
            <person name="Fox G.E."/>
            <person name="McNeill T.Z."/>
            <person name="Jiang H."/>
            <person name="Muzny D."/>
            <person name="Jacob L.S."/>
            <person name="Hawes A.C."/>
            <person name="Sodergren E."/>
            <person name="Gill R."/>
            <person name="Hume J."/>
            <person name="Morgan M."/>
            <person name="Fan G."/>
            <person name="Amin A.G."/>
            <person name="Gibbs R.A."/>
            <person name="Hong C."/>
            <person name="Yu X.-J."/>
            <person name="Walker D.H."/>
            <person name="Weinstock G.M."/>
        </authorList>
    </citation>
    <scope>NUCLEOTIDE SEQUENCE [LARGE SCALE GENOMIC DNA]</scope>
    <source>
        <strain>ATCC VR-144 / Wilmington</strain>
    </source>
</reference>
<proteinExistence type="inferred from homology"/>